<feature type="chain" id="PRO_1000071889" description="DNA-directed RNA polymerase subunit Rpo11">
    <location>
        <begin position="1"/>
        <end position="90"/>
    </location>
</feature>
<protein>
    <recommendedName>
        <fullName evidence="1">DNA-directed RNA polymerase subunit Rpo11</fullName>
        <ecNumber evidence="1">2.7.7.6</ecNumber>
    </recommendedName>
    <alternativeName>
        <fullName evidence="1">DNA-directed RNA polymerase subunit L</fullName>
    </alternativeName>
</protein>
<accession>A4YHV0</accession>
<keyword id="KW-0963">Cytoplasm</keyword>
<keyword id="KW-0240">DNA-directed RNA polymerase</keyword>
<keyword id="KW-0548">Nucleotidyltransferase</keyword>
<keyword id="KW-1185">Reference proteome</keyword>
<keyword id="KW-0804">Transcription</keyword>
<keyword id="KW-0808">Transferase</keyword>
<evidence type="ECO:0000255" key="1">
    <source>
        <dbReference type="HAMAP-Rule" id="MF_00261"/>
    </source>
</evidence>
<name>RPO11_METS5</name>
<comment type="function">
    <text evidence="1">DNA-dependent RNA polymerase (RNAP) catalyzes the transcription of DNA into RNA using the four ribonucleoside triphosphates as substrates.</text>
</comment>
<comment type="catalytic activity">
    <reaction evidence="1">
        <text>RNA(n) + a ribonucleoside 5'-triphosphate = RNA(n+1) + diphosphate</text>
        <dbReference type="Rhea" id="RHEA:21248"/>
        <dbReference type="Rhea" id="RHEA-COMP:14527"/>
        <dbReference type="Rhea" id="RHEA-COMP:17342"/>
        <dbReference type="ChEBI" id="CHEBI:33019"/>
        <dbReference type="ChEBI" id="CHEBI:61557"/>
        <dbReference type="ChEBI" id="CHEBI:140395"/>
        <dbReference type="EC" id="2.7.7.6"/>
    </reaction>
</comment>
<comment type="subunit">
    <text evidence="1">Part of the RNA polymerase complex.</text>
</comment>
<comment type="subcellular location">
    <subcellularLocation>
        <location evidence="1">Cytoplasm</location>
    </subcellularLocation>
</comment>
<comment type="similarity">
    <text evidence="1">Belongs to the archaeal Rpo11/eukaryotic RPB11/RPC19 RNA polymerase subunit family.</text>
</comment>
<dbReference type="EC" id="2.7.7.6" evidence="1"/>
<dbReference type="EMBL" id="CP000682">
    <property type="protein sequence ID" value="ABP96002.1"/>
    <property type="molecule type" value="Genomic_DNA"/>
</dbReference>
<dbReference type="RefSeq" id="WP_012021789.1">
    <property type="nucleotide sequence ID" value="NZ_CP139956.1"/>
</dbReference>
<dbReference type="SMR" id="A4YHV0"/>
<dbReference type="STRING" id="399549.Msed_1862"/>
<dbReference type="KEGG" id="mse:Msed_1862"/>
<dbReference type="eggNOG" id="arCOG04111">
    <property type="taxonomic scope" value="Archaea"/>
</dbReference>
<dbReference type="HOGENOM" id="CLU_090381_5_3_2"/>
<dbReference type="Proteomes" id="UP000000242">
    <property type="component" value="Chromosome"/>
</dbReference>
<dbReference type="GO" id="GO:0005737">
    <property type="term" value="C:cytoplasm"/>
    <property type="evidence" value="ECO:0007669"/>
    <property type="project" value="UniProtKB-SubCell"/>
</dbReference>
<dbReference type="GO" id="GO:0000428">
    <property type="term" value="C:DNA-directed RNA polymerase complex"/>
    <property type="evidence" value="ECO:0007669"/>
    <property type="project" value="UniProtKB-KW"/>
</dbReference>
<dbReference type="GO" id="GO:0003677">
    <property type="term" value="F:DNA binding"/>
    <property type="evidence" value="ECO:0007669"/>
    <property type="project" value="InterPro"/>
</dbReference>
<dbReference type="GO" id="GO:0003899">
    <property type="term" value="F:DNA-directed RNA polymerase activity"/>
    <property type="evidence" value="ECO:0007669"/>
    <property type="project" value="UniProtKB-UniRule"/>
</dbReference>
<dbReference type="GO" id="GO:0046983">
    <property type="term" value="F:protein dimerization activity"/>
    <property type="evidence" value="ECO:0007669"/>
    <property type="project" value="InterPro"/>
</dbReference>
<dbReference type="GO" id="GO:0006351">
    <property type="term" value="P:DNA-templated transcription"/>
    <property type="evidence" value="ECO:0007669"/>
    <property type="project" value="UniProtKB-UniRule"/>
</dbReference>
<dbReference type="CDD" id="cd06927">
    <property type="entry name" value="RNAP_L"/>
    <property type="match status" value="1"/>
</dbReference>
<dbReference type="Gene3D" id="3.30.1360.10">
    <property type="entry name" value="RNA polymerase, RBP11-like subunit"/>
    <property type="match status" value="1"/>
</dbReference>
<dbReference type="HAMAP" id="MF_00261">
    <property type="entry name" value="RNApol_arch_Rpo11"/>
    <property type="match status" value="1"/>
</dbReference>
<dbReference type="InterPro" id="IPR036603">
    <property type="entry name" value="RBP11-like"/>
</dbReference>
<dbReference type="InterPro" id="IPR009025">
    <property type="entry name" value="RBP11-like_dimer"/>
</dbReference>
<dbReference type="InterPro" id="IPR008193">
    <property type="entry name" value="RNA_pol_Rpb11_13-16kDa_CS"/>
</dbReference>
<dbReference type="InterPro" id="IPR022905">
    <property type="entry name" value="Rpo11-like"/>
</dbReference>
<dbReference type="NCBIfam" id="NF002233">
    <property type="entry name" value="PRK01146.1-1"/>
    <property type="match status" value="1"/>
</dbReference>
<dbReference type="PANTHER" id="PTHR13946">
    <property type="entry name" value="DNA-DIRECTED RNA POLYMERASE I,II,III"/>
    <property type="match status" value="1"/>
</dbReference>
<dbReference type="PANTHER" id="PTHR13946:SF28">
    <property type="entry name" value="DNA-DIRECTED RNA POLYMERASES I AND III SUBUNIT RPAC2"/>
    <property type="match status" value="1"/>
</dbReference>
<dbReference type="Pfam" id="PF13656">
    <property type="entry name" value="RNA_pol_L_2"/>
    <property type="match status" value="1"/>
</dbReference>
<dbReference type="SUPFAM" id="SSF55257">
    <property type="entry name" value="RBP11-like subunits of RNA polymerase"/>
    <property type="match status" value="1"/>
</dbReference>
<dbReference type="PROSITE" id="PS01154">
    <property type="entry name" value="RNA_POL_L_13KD"/>
    <property type="match status" value="1"/>
</dbReference>
<organism>
    <name type="scientific">Metallosphaera sedula (strain ATCC 51363 / DSM 5348 / JCM 9185 / NBRC 15509 / TH2)</name>
    <dbReference type="NCBI Taxonomy" id="399549"/>
    <lineage>
        <taxon>Archaea</taxon>
        <taxon>Thermoproteota</taxon>
        <taxon>Thermoprotei</taxon>
        <taxon>Sulfolobales</taxon>
        <taxon>Sulfolobaceae</taxon>
        <taxon>Metallosphaera</taxon>
    </lineage>
</organism>
<sequence>MEIAVEREEENYLELRIQGEDHTLGNLIAGRLRSVKGVILATYYLPHPLKDELVIKIKTDGTISPREALNRAIEDVKVLGESFLDELEQV</sequence>
<gene>
    <name evidence="1" type="primary">rpo11</name>
    <name evidence="1" type="synonym">rpoL</name>
    <name type="ordered locus">Msed_1862</name>
</gene>
<proteinExistence type="inferred from homology"/>
<reference key="1">
    <citation type="journal article" date="2008" name="Appl. Environ. Microbiol.">
        <title>The genome sequence of the metal-mobilizing, extremely thermoacidophilic archaeon Metallosphaera sedula provides insights into bioleaching-associated metabolism.</title>
        <authorList>
            <person name="Auernik K.S."/>
            <person name="Maezato Y."/>
            <person name="Blum P.H."/>
            <person name="Kelly R.M."/>
        </authorList>
    </citation>
    <scope>NUCLEOTIDE SEQUENCE [LARGE SCALE GENOMIC DNA]</scope>
    <source>
        <strain>ATCC 51363 / DSM 5348 / JCM 9185 / NBRC 15509 / TH2</strain>
    </source>
</reference>